<dbReference type="VEuPathDB" id="FungiDB:DVH05_003841"/>
<dbReference type="GO" id="GO:0005576">
    <property type="term" value="C:extracellular region"/>
    <property type="evidence" value="ECO:0007669"/>
    <property type="project" value="UniProtKB-SubCell"/>
</dbReference>
<dbReference type="GO" id="GO:0042025">
    <property type="term" value="C:host cell nucleus"/>
    <property type="evidence" value="ECO:0007669"/>
    <property type="project" value="UniProtKB-SubCell"/>
</dbReference>
<dbReference type="InterPro" id="IPR045379">
    <property type="entry name" value="Crinkler_N"/>
</dbReference>
<dbReference type="Pfam" id="PF20147">
    <property type="entry name" value="Crinkler"/>
    <property type="match status" value="1"/>
</dbReference>
<gene>
    <name evidence="4" type="primary">CRN4</name>
    <name evidence="3" type="synonym">CRN83_152</name>
</gene>
<evidence type="ECO:0000269" key="1">
    <source>
    </source>
</evidence>
<evidence type="ECO:0000269" key="2">
    <source>
    </source>
</evidence>
<evidence type="ECO:0000303" key="3">
    <source>
    </source>
</evidence>
<evidence type="ECO:0000303" key="4">
    <source>
    </source>
</evidence>
<evidence type="ECO:0000305" key="5"/>
<evidence type="ECO:0000305" key="6">
    <source>
    </source>
</evidence>
<name>CRN4_PHYCP</name>
<reference key="1">
    <citation type="journal article" date="2013" name="PLoS ONE">
        <title>Identification and characterisation CRN effectors in Phytophthora capsici shows modularity and functional diversity.</title>
        <authorList>
            <person name="Stam R."/>
            <person name="Jupe J."/>
            <person name="Howden A.J."/>
            <person name="Morris J.A."/>
            <person name="Boevink P.C."/>
            <person name="Hedley P.E."/>
            <person name="Huitema E."/>
        </authorList>
    </citation>
    <scope>NUCLEOTIDE SEQUENCE [MRNA]</scope>
    <scope>DOMAIN</scope>
    <scope>FUNCTION</scope>
</reference>
<reference key="2">
    <citation type="journal article" date="2015" name="PLoS ONE">
        <title>A Virulence Essential CRN Effector of Phytophthora capsici Suppresses Host Defense and Induces Cell Death in Plant Nucleus.</title>
        <authorList>
            <person name="Mafurah J.J."/>
            <person name="Ma H."/>
            <person name="Zhang M."/>
            <person name="Xu J."/>
            <person name="He F."/>
            <person name="Ye T."/>
            <person name="Shen D."/>
            <person name="Chen Y."/>
            <person name="Rajput N.A."/>
            <person name="Dou D."/>
        </authorList>
    </citation>
    <scope>FUNCTION</scope>
    <scope>DISRUPTION PHENOTYPE</scope>
    <scope>INDUCTION</scope>
    <scope>SUBCELLULAR LOCATION</scope>
</reference>
<sequence length="426" mass="47002">MVKLSLQCAVVDQAGSSFDVEIDDSAKVSKLKKVIKEENPATITCDAKDLQLFLAKKDDAWLDGAGAAAVELDEHGHPQGCVQMDPTLWVKNPKHFGDNFQPGEGQVHVLVVVPEGVVGSASETSKMDFVVDKVSKLYEHSVLSKRTRYVHSEMSSSKGNKLVKELKIRVTPVDAVPFTGGSPTPVEEFEWIKGRTEEQQSGRYRDYVEANIGDVLRNNKLCVFSVEKGANILSVEVPGCDVDLAGRTDMIVLSAIVQKFPHYLPHLPGVKMLIEVKREVKSASEFQALSELIAMDFIVDESVMALLTNLTNHWEFLWVSNKSNNRPIIATTTLTTPGEAFEVIRTLLAQSSTADADIMLPCLAEPVKRRKLNQMLPFIGEASGDGIRESIERYYDIASCLGPDFDMARAVARQVTRSIPTLSYFS</sequence>
<keyword id="KW-1048">Host nucleus</keyword>
<keyword id="KW-0964">Secreted</keyword>
<keyword id="KW-0843">Virulence</keyword>
<accession>P0CV73</accession>
<comment type="function">
    <text evidence="1 2">Secreted effector that is critical to pathogenesis by suppressing plant immune responsess (PubMed:23536880, PubMed:26011314). Promotes Phytophthora infection by suppressing the H(2)O(2) accumulation and callose deposition (PubMed:26011314). May induce cell death by regulating expression of cell death-related genes (PubMed:26011314).</text>
</comment>
<comment type="subcellular location">
    <subcellularLocation>
        <location evidence="1">Secreted</location>
    </subcellularLocation>
    <subcellularLocation>
        <location evidence="1">Host nucleus</location>
    </subcellularLocation>
    <text evidence="2">The nuclear localization is required for both of its cell death-inducing activity and virulent function.</text>
</comment>
<comment type="induction">
    <text evidence="2">Expression is up-regulated at the early stages of infection.</text>
</comment>
<comment type="domain">
    <text evidence="6">The CRN proteins have modular architectures that include a signal peptide, a conserved N-terminus, and highly diverse C-terminal domains. The conserved CRN N-terminus harbors a distinct LXLFLAK motif, which is followed by the conserved DWL domain. A highly conserved HVLVXXP motif marks the end of the CRN N-terminal domains and forms a junction where diverse C-terminal domains are fused. The conserved CRN N-terminus mediates the translocation into the plant host cells.</text>
</comment>
<comment type="disruption phenotype">
    <text evidence="2">Leads to the loss of abilities to suppress pathogen-associated molecular patterns (PAMPS)-triggered immunity (PTI) in host cells.</text>
</comment>
<comment type="similarity">
    <text evidence="5">Belongs to the Crinkler effector family.</text>
</comment>
<feature type="chain" id="PRO_0000448090" description="Crinkler effector protein 4">
    <location>
        <begin position="1"/>
        <end position="426"/>
    </location>
</feature>
<feature type="region of interest" description="LQLFLAK domain" evidence="6">
    <location>
        <begin position="20"/>
        <end position="57"/>
    </location>
</feature>
<feature type="region of interest" description="DWL domain" evidence="6">
    <location>
        <begin position="59"/>
        <end position="107"/>
    </location>
</feature>
<feature type="region of interest" description="Effector domain" evidence="6">
    <location>
        <begin position="115"/>
        <end position="426"/>
    </location>
</feature>
<feature type="short sequence motif" description="HVLVXXP motif" evidence="6">
    <location>
        <begin position="108"/>
        <end position="114"/>
    </location>
</feature>
<protein>
    <recommendedName>
        <fullName evidence="4">Crinkler effector protein 4</fullName>
    </recommendedName>
</protein>
<proteinExistence type="evidence at transcript level"/>
<organism>
    <name type="scientific">Phytophthora capsici</name>
    <dbReference type="NCBI Taxonomy" id="4784"/>
    <lineage>
        <taxon>Eukaryota</taxon>
        <taxon>Sar</taxon>
        <taxon>Stramenopiles</taxon>
        <taxon>Oomycota</taxon>
        <taxon>Peronosporales</taxon>
        <taxon>Peronosporaceae</taxon>
        <taxon>Phytophthora</taxon>
    </lineage>
</organism>